<accession>A7UA95</accession>
<keyword id="KW-0130">Cell adhesion</keyword>
<keyword id="KW-0217">Developmental protein</keyword>
<keyword id="KW-1185">Reference proteome</keyword>
<organism>
    <name type="scientific">Danio rerio</name>
    <name type="common">Zebrafish</name>
    <name type="synonym">Brachydanio rerio</name>
    <dbReference type="NCBI Taxonomy" id="7955"/>
    <lineage>
        <taxon>Eukaryota</taxon>
        <taxon>Metazoa</taxon>
        <taxon>Chordata</taxon>
        <taxon>Craniata</taxon>
        <taxon>Vertebrata</taxon>
        <taxon>Euteleostomi</taxon>
        <taxon>Actinopterygii</taxon>
        <taxon>Neopterygii</taxon>
        <taxon>Teleostei</taxon>
        <taxon>Ostariophysi</taxon>
        <taxon>Cypriniformes</taxon>
        <taxon>Danionidae</taxon>
        <taxon>Danioninae</taxon>
        <taxon>Danio</taxon>
    </lineage>
</organism>
<dbReference type="EMBL" id="EU031809">
    <property type="protein sequence ID" value="ABU24309.1"/>
    <property type="molecule type" value="mRNA"/>
</dbReference>
<dbReference type="RefSeq" id="NP_001096039.1">
    <property type="nucleotide sequence ID" value="NM_001102569.2"/>
</dbReference>
<dbReference type="SMR" id="A7UA95"/>
<dbReference type="FunCoup" id="A7UA95">
    <property type="interactions" value="1335"/>
</dbReference>
<dbReference type="STRING" id="7955.ENSDARP00000134834"/>
<dbReference type="PaxDb" id="7955-ENSDARP00000101722"/>
<dbReference type="PeptideAtlas" id="A7UA95"/>
<dbReference type="GeneID" id="562363"/>
<dbReference type="KEGG" id="dre:562363"/>
<dbReference type="AGR" id="ZFIN:ZDB-GENE-071206-1"/>
<dbReference type="CTD" id="55698"/>
<dbReference type="ZFIN" id="ZDB-GENE-071206-1">
    <property type="gene designation" value="radil"/>
</dbReference>
<dbReference type="eggNOG" id="KOG0160">
    <property type="taxonomic scope" value="Eukaryota"/>
</dbReference>
<dbReference type="InParanoid" id="A7UA95"/>
<dbReference type="OrthoDB" id="3908708at2759"/>
<dbReference type="PhylomeDB" id="A7UA95"/>
<dbReference type="PRO" id="PR:A7UA95"/>
<dbReference type="Proteomes" id="UP000000437">
    <property type="component" value="Chromosome 1"/>
</dbReference>
<dbReference type="GO" id="GO:0005874">
    <property type="term" value="C:microtubule"/>
    <property type="evidence" value="ECO:0000318"/>
    <property type="project" value="GO_Central"/>
</dbReference>
<dbReference type="GO" id="GO:0051020">
    <property type="term" value="F:GTPase binding"/>
    <property type="evidence" value="ECO:0000318"/>
    <property type="project" value="GO_Central"/>
</dbReference>
<dbReference type="GO" id="GO:0001755">
    <property type="term" value="P:neural crest cell migration"/>
    <property type="evidence" value="ECO:0000315"/>
    <property type="project" value="ZFIN"/>
</dbReference>
<dbReference type="GO" id="GO:0007165">
    <property type="term" value="P:signal transduction"/>
    <property type="evidence" value="ECO:0007669"/>
    <property type="project" value="InterPro"/>
</dbReference>
<dbReference type="GO" id="GO:0034446">
    <property type="term" value="P:substrate adhesion-dependent cell spreading"/>
    <property type="evidence" value="ECO:0000318"/>
    <property type="project" value="GO_Central"/>
</dbReference>
<dbReference type="CDD" id="cd22733">
    <property type="entry name" value="FHA_RADIL"/>
    <property type="match status" value="1"/>
</dbReference>
<dbReference type="CDD" id="cd15472">
    <property type="entry name" value="Myo5p-like_CBD_Rasip1"/>
    <property type="match status" value="1"/>
</dbReference>
<dbReference type="CDD" id="cd06690">
    <property type="entry name" value="PDZ_Radil-like"/>
    <property type="match status" value="1"/>
</dbReference>
<dbReference type="CDD" id="cd17116">
    <property type="entry name" value="RA_Radil_like"/>
    <property type="match status" value="1"/>
</dbReference>
<dbReference type="FunFam" id="2.30.42.10:FF:000156">
    <property type="entry name" value="Ras-associating and dilute domain-containing protein"/>
    <property type="match status" value="1"/>
</dbReference>
<dbReference type="Gene3D" id="2.30.42.10">
    <property type="match status" value="1"/>
</dbReference>
<dbReference type="Gene3D" id="2.60.200.20">
    <property type="match status" value="1"/>
</dbReference>
<dbReference type="Gene3D" id="3.10.20.90">
    <property type="entry name" value="Phosphatidylinositol 3-kinase Catalytic Subunit, Chain A, domain 1"/>
    <property type="match status" value="1"/>
</dbReference>
<dbReference type="InterPro" id="IPR037983">
    <property type="entry name" value="CBD_Rasip1/Radil"/>
</dbReference>
<dbReference type="InterPro" id="IPR002710">
    <property type="entry name" value="Dilute_dom"/>
</dbReference>
<dbReference type="InterPro" id="IPR000253">
    <property type="entry name" value="FHA_dom"/>
</dbReference>
<dbReference type="InterPro" id="IPR001478">
    <property type="entry name" value="PDZ"/>
</dbReference>
<dbReference type="InterPro" id="IPR036034">
    <property type="entry name" value="PDZ_sf"/>
</dbReference>
<dbReference type="InterPro" id="IPR000159">
    <property type="entry name" value="RA_dom"/>
</dbReference>
<dbReference type="InterPro" id="IPR008984">
    <property type="entry name" value="SMAD_FHA_dom_sf"/>
</dbReference>
<dbReference type="InterPro" id="IPR029071">
    <property type="entry name" value="Ubiquitin-like_domsf"/>
</dbReference>
<dbReference type="InterPro" id="IPR052072">
    <property type="entry name" value="Vascular_dev_regulator"/>
</dbReference>
<dbReference type="PANTHER" id="PTHR16027">
    <property type="entry name" value="DILUTE DOMAIN-CONTAINING PROTEIN YPR089W"/>
    <property type="match status" value="1"/>
</dbReference>
<dbReference type="PANTHER" id="PTHR16027:SF3">
    <property type="entry name" value="RAS-ASSOCIATING AND DILUTE DOMAIN-CONTAINING PROTEIN"/>
    <property type="match status" value="1"/>
</dbReference>
<dbReference type="Pfam" id="PF01843">
    <property type="entry name" value="DIL"/>
    <property type="match status" value="1"/>
</dbReference>
<dbReference type="Pfam" id="PF00498">
    <property type="entry name" value="FHA"/>
    <property type="match status" value="1"/>
</dbReference>
<dbReference type="Pfam" id="PF00595">
    <property type="entry name" value="PDZ"/>
    <property type="match status" value="1"/>
</dbReference>
<dbReference type="Pfam" id="PF00788">
    <property type="entry name" value="RA"/>
    <property type="match status" value="1"/>
</dbReference>
<dbReference type="SMART" id="SM01132">
    <property type="entry name" value="DIL"/>
    <property type="match status" value="1"/>
</dbReference>
<dbReference type="SMART" id="SM00228">
    <property type="entry name" value="PDZ"/>
    <property type="match status" value="1"/>
</dbReference>
<dbReference type="SMART" id="SM00314">
    <property type="entry name" value="RA"/>
    <property type="match status" value="1"/>
</dbReference>
<dbReference type="SUPFAM" id="SSF50156">
    <property type="entry name" value="PDZ domain-like"/>
    <property type="match status" value="1"/>
</dbReference>
<dbReference type="SUPFAM" id="SSF49879">
    <property type="entry name" value="SMAD/FHA domain"/>
    <property type="match status" value="1"/>
</dbReference>
<dbReference type="SUPFAM" id="SSF54236">
    <property type="entry name" value="Ubiquitin-like"/>
    <property type="match status" value="1"/>
</dbReference>
<dbReference type="PROSITE" id="PS51126">
    <property type="entry name" value="DILUTE"/>
    <property type="match status" value="1"/>
</dbReference>
<dbReference type="PROSITE" id="PS50106">
    <property type="entry name" value="PDZ"/>
    <property type="match status" value="1"/>
</dbReference>
<dbReference type="PROSITE" id="PS50200">
    <property type="entry name" value="RA"/>
    <property type="match status" value="1"/>
</dbReference>
<name>RADIL_DANRE</name>
<comment type="function">
    <text evidence="6">Downstream effector of Rap required for cell adhesion and migration of neural crest precursors during development.</text>
</comment>
<comment type="subunit">
    <text evidence="1">Interacts with RAP1A; in a GTP-dependent manner.</text>
</comment>
<comment type="tissue specificity">
    <text evidence="6">Ubiquitously expressed and enriched in the anterior part of the embryos.</text>
</comment>
<comment type="developmental stage">
    <text evidence="6">Present at very low level in one-cell embryos, suggesting the presence of maternally deposited transcripts. Increases upon the onset of zygotic transcription (around the 1000-cell stage), eventually peaking at 72 hpf.</text>
</comment>
<comment type="miscellaneous">
    <text>Knockdown results in multiple defects in neural crest-derived lineages such as cartilage, pigment cells, and enteric neurons.</text>
</comment>
<comment type="similarity">
    <text evidence="7">Belongs to the RADIL family.</text>
</comment>
<protein>
    <recommendedName>
        <fullName>Ras-associating and dilute domain-containing protein</fullName>
    </recommendedName>
</protein>
<feature type="chain" id="PRO_0000355182" description="Ras-associating and dilute domain-containing protein">
    <location>
        <begin position="1"/>
        <end position="1124"/>
    </location>
</feature>
<feature type="domain" description="Ras-associating" evidence="3">
    <location>
        <begin position="61"/>
        <end position="164"/>
    </location>
</feature>
<feature type="domain" description="FHA">
    <location>
        <begin position="284"/>
        <end position="342"/>
    </location>
</feature>
<feature type="domain" description="Dilute" evidence="4">
    <location>
        <begin position="516"/>
        <end position="809"/>
    </location>
</feature>
<feature type="domain" description="PDZ" evidence="2">
    <location>
        <begin position="1027"/>
        <end position="1112"/>
    </location>
</feature>
<feature type="region of interest" description="Disordered" evidence="5">
    <location>
        <begin position="226"/>
        <end position="253"/>
    </location>
</feature>
<feature type="region of interest" description="Disordered" evidence="5">
    <location>
        <begin position="850"/>
        <end position="942"/>
    </location>
</feature>
<feature type="region of interest" description="Disordered" evidence="5">
    <location>
        <begin position="960"/>
        <end position="982"/>
    </location>
</feature>
<feature type="compositionally biased region" description="Basic and acidic residues" evidence="5">
    <location>
        <begin position="238"/>
        <end position="252"/>
    </location>
</feature>
<feature type="compositionally biased region" description="Pro residues" evidence="5">
    <location>
        <begin position="866"/>
        <end position="876"/>
    </location>
</feature>
<feature type="compositionally biased region" description="Basic and acidic residues" evidence="5">
    <location>
        <begin position="903"/>
        <end position="912"/>
    </location>
</feature>
<feature type="compositionally biased region" description="Polar residues" evidence="5">
    <location>
        <begin position="926"/>
        <end position="937"/>
    </location>
</feature>
<feature type="compositionally biased region" description="Basic and acidic residues" evidence="5">
    <location>
        <begin position="960"/>
        <end position="969"/>
    </location>
</feature>
<reference key="1">
    <citation type="journal article" date="2007" name="Genes Dev.">
        <title>A Rap GTPase interactor, RADIL, mediates migration of neural crest precursors.</title>
        <authorList>
            <person name="Smolen G.A."/>
            <person name="Schott B.J."/>
            <person name="Stewart R.A."/>
            <person name="Diederichs S."/>
            <person name="Muir B."/>
            <person name="Provencher H.L."/>
            <person name="Look A.T."/>
            <person name="Sgroi D.C."/>
            <person name="Peterson R.T."/>
            <person name="Haber D.A."/>
        </authorList>
    </citation>
    <scope>NUCLEOTIDE SEQUENCE [MRNA]</scope>
    <scope>FUNCTION</scope>
    <scope>TISSUE SPECIFICITY</scope>
    <scope>DEVELOPMENTAL STAGE</scope>
</reference>
<sequence length="1124" mass="124934">MFYGSSSASMSLPSKNRLKRQSRTFTQVLYRTLSYRDRRSVTDLPEQVRDDPAELSTQSSAPGVLKIFGDEISAGANYKSVLATPRSSAQELIKEALERYSLNKTSACNFVLCDVIGRFEGPDRRWRTECLRALGNNEKPLLLQDLWKPKEGFSRRFELRRRAEVEELAAKEKDTVTADINAQARKLQRNRAKGTMTLQHGSSFCRSLSETSLNLVGLPGEEPKRYYSTLPGPIRTRSARDSEIRKERDGGGVKHSLYQSPHLLLLQGYNQQDCLVYLLNREQHTVGQETASARPNICLSSPDVLPLHCRIRRAAQRRSSSDQRLLLEPVAHGNVLVNFMRIERPTPIRHGDLLSFGAHYIFLYKDPLSAKPLPAQTLTRLRTLAKLCDGESGGLPEKGDACRMCGAVLHEPAASSRRSSKAPARGSQKRKLALEFERAHEDALVNRVLTLIEPSGDDHKLTPAYLLCLCIKHSANTFPPGSFGKLLQKIAKRIQTIAWEKTKELAQKQAQHQDPASLSLLSISDLVPDLQFIFFWMSNAIEILYFIQQKSPAYMQTIELMDDKAGSKESLLSATISANEEAMTILEEVIMYTFQQCVYYITKTLYVVLPGLLDCNPFGTEPSSEQCRRAAGVCVCAVCVMPEAVRRVVSVFQTTSDLLQQYQVHSEIQSQMFAYLFFFTNVSLFNQLIDKGPARGWFQRSRVLQIQASVKILLDWAKGAGHNHLAQKFFAKFCSTVTILASPPQQLSQMSWKALCAEHPSLKPVQLHRILTQYQLMAELGPLPIWQPSSEDEAYIYRTVDLLESFENHPPIVLPSAGFKVDLESDCVEDSIYRQLLYVRHFVWGLRTKTHPSNGCTDRQDAQREPPQPHSSPHPAPSVRGEGEGEVRSSSTTLGGRGEGAGAEDRTRDKPTHGIHYRNGSGARYANQSQATDSSCILTPPNTPLYPEHTYIQSNTAHYPEHASQEHTHTHSHTKTNGCMRSTPEHKKINGFISNGIEGPLSGCGFPFPVPVSHLGPKSDDICSVFVVDLDKGPYGLGMGLIDGLHTPLNSPGIYIRTLIPDGPAAADGRLCIGDRILAVNGTSLIGADYQSAVDLIRLGGGRLRFLVAKSDLEVSEKISASSC</sequence>
<evidence type="ECO:0000250" key="1"/>
<evidence type="ECO:0000255" key="2">
    <source>
        <dbReference type="PROSITE-ProRule" id="PRU00143"/>
    </source>
</evidence>
<evidence type="ECO:0000255" key="3">
    <source>
        <dbReference type="PROSITE-ProRule" id="PRU00166"/>
    </source>
</evidence>
<evidence type="ECO:0000255" key="4">
    <source>
        <dbReference type="PROSITE-ProRule" id="PRU00503"/>
    </source>
</evidence>
<evidence type="ECO:0000256" key="5">
    <source>
        <dbReference type="SAM" id="MobiDB-lite"/>
    </source>
</evidence>
<evidence type="ECO:0000269" key="6">
    <source>
    </source>
</evidence>
<evidence type="ECO:0000305" key="7"/>
<proteinExistence type="evidence at transcript level"/>
<gene>
    <name type="primary">radil</name>
</gene>